<reference key="1">
    <citation type="journal article" date="2009" name="PLoS Genet.">
        <title>Organised genome dynamics in the Escherichia coli species results in highly diverse adaptive paths.</title>
        <authorList>
            <person name="Touchon M."/>
            <person name="Hoede C."/>
            <person name="Tenaillon O."/>
            <person name="Barbe V."/>
            <person name="Baeriswyl S."/>
            <person name="Bidet P."/>
            <person name="Bingen E."/>
            <person name="Bonacorsi S."/>
            <person name="Bouchier C."/>
            <person name="Bouvet O."/>
            <person name="Calteau A."/>
            <person name="Chiapello H."/>
            <person name="Clermont O."/>
            <person name="Cruveiller S."/>
            <person name="Danchin A."/>
            <person name="Diard M."/>
            <person name="Dossat C."/>
            <person name="Karoui M.E."/>
            <person name="Frapy E."/>
            <person name="Garry L."/>
            <person name="Ghigo J.M."/>
            <person name="Gilles A.M."/>
            <person name="Johnson J."/>
            <person name="Le Bouguenec C."/>
            <person name="Lescat M."/>
            <person name="Mangenot S."/>
            <person name="Martinez-Jehanne V."/>
            <person name="Matic I."/>
            <person name="Nassif X."/>
            <person name="Oztas S."/>
            <person name="Petit M.A."/>
            <person name="Pichon C."/>
            <person name="Rouy Z."/>
            <person name="Ruf C.S."/>
            <person name="Schneider D."/>
            <person name="Tourret J."/>
            <person name="Vacherie B."/>
            <person name="Vallenet D."/>
            <person name="Medigue C."/>
            <person name="Rocha E.P.C."/>
            <person name="Denamur E."/>
        </authorList>
    </citation>
    <scope>NUCLEOTIDE SEQUENCE [LARGE SCALE GENOMIC DNA]</scope>
    <source>
        <strain>S88 / ExPEC</strain>
    </source>
</reference>
<comment type="function">
    <text evidence="1">Catalyzes the ATP-dependent 2-thiolation of cytidine in position 32 of tRNA, to form 2-thiocytidine (s(2)C32). The sulfur atoms are provided by the cysteine/cysteine desulfurase (IscS) system.</text>
</comment>
<comment type="catalytic activity">
    <reaction evidence="1">
        <text>cytidine(32) in tRNA + S-sulfanyl-L-cysteinyl-[cysteine desulfurase] + AH2 + ATP = 2-thiocytidine(32) in tRNA + L-cysteinyl-[cysteine desulfurase] + A + AMP + diphosphate + H(+)</text>
        <dbReference type="Rhea" id="RHEA:57048"/>
        <dbReference type="Rhea" id="RHEA-COMP:10288"/>
        <dbReference type="Rhea" id="RHEA-COMP:12157"/>
        <dbReference type="Rhea" id="RHEA-COMP:12158"/>
        <dbReference type="Rhea" id="RHEA-COMP:14821"/>
        <dbReference type="ChEBI" id="CHEBI:13193"/>
        <dbReference type="ChEBI" id="CHEBI:15378"/>
        <dbReference type="ChEBI" id="CHEBI:17499"/>
        <dbReference type="ChEBI" id="CHEBI:29950"/>
        <dbReference type="ChEBI" id="CHEBI:30616"/>
        <dbReference type="ChEBI" id="CHEBI:33019"/>
        <dbReference type="ChEBI" id="CHEBI:61963"/>
        <dbReference type="ChEBI" id="CHEBI:82748"/>
        <dbReference type="ChEBI" id="CHEBI:141453"/>
        <dbReference type="ChEBI" id="CHEBI:456215"/>
    </reaction>
    <physiologicalReaction direction="left-to-right" evidence="1">
        <dbReference type="Rhea" id="RHEA:57049"/>
    </physiologicalReaction>
</comment>
<comment type="cofactor">
    <cofactor evidence="1">
        <name>Mg(2+)</name>
        <dbReference type="ChEBI" id="CHEBI:18420"/>
    </cofactor>
</comment>
<comment type="cofactor">
    <cofactor evidence="1">
        <name>[4Fe-4S] cluster</name>
        <dbReference type="ChEBI" id="CHEBI:49883"/>
    </cofactor>
    <text evidence="1">Binds 1 [4Fe-4S] cluster per subunit. The cluster is chelated by three Cys residues, the fourth Fe has a free coordination site that may bind a sulfur atom transferred from the persulfide of IscS.</text>
</comment>
<comment type="pathway">
    <text evidence="1">tRNA modification.</text>
</comment>
<comment type="subunit">
    <text evidence="1">Homodimer.</text>
</comment>
<comment type="subcellular location">
    <subcellularLocation>
        <location evidence="1">Cytoplasm</location>
    </subcellularLocation>
</comment>
<comment type="miscellaneous">
    <text evidence="1">The thiolation reaction likely consists of two steps: a first activation step by ATP to form an adenylated intermediate of the target base of tRNA, and a second nucleophilic substitution step of the sulfur (S) atom supplied by the hydrosulfide attached to the Fe-S cluster.</text>
</comment>
<comment type="similarity">
    <text evidence="1">Belongs to the TtcA family.</text>
</comment>
<protein>
    <recommendedName>
        <fullName evidence="1">tRNA-cytidine(32) 2-sulfurtransferase</fullName>
        <ecNumber evidence="1">2.8.1.-</ecNumber>
    </recommendedName>
    <alternativeName>
        <fullName evidence="1">Two-thiocytidine biosynthesis protein A</fullName>
    </alternativeName>
    <alternativeName>
        <fullName evidence="1">tRNA 2-thiocytidine biosynthesis protein TtcA</fullName>
    </alternativeName>
</protein>
<keyword id="KW-0004">4Fe-4S</keyword>
<keyword id="KW-0067">ATP-binding</keyword>
<keyword id="KW-0963">Cytoplasm</keyword>
<keyword id="KW-0408">Iron</keyword>
<keyword id="KW-0411">Iron-sulfur</keyword>
<keyword id="KW-0460">Magnesium</keyword>
<keyword id="KW-0479">Metal-binding</keyword>
<keyword id="KW-0547">Nucleotide-binding</keyword>
<keyword id="KW-1185">Reference proteome</keyword>
<keyword id="KW-0694">RNA-binding</keyword>
<keyword id="KW-0808">Transferase</keyword>
<keyword id="KW-0819">tRNA processing</keyword>
<keyword id="KW-0820">tRNA-binding</keyword>
<sequence length="311" mass="35504">MQENQQITKKEQYNLNKLQKRLRRNVGEAIADFNMIEEGDRIMVCLSGGKDSYTMLEILRNLQQSAPINFSLVAVNLDQKQPGFPEHVLPEYLETLGVEYKIVEENTYGIVKEKIPEGKTTCSLCSRLRRGILYRTATELGATKIALGHHRDDILQTLFLNMFYGGKMKGMPPKLMSDDGKHIVIRPLAYCREKDIQRFADAKAFPIIPCNLCGSQPNLQRQVIADMLRDWDKRYPGRIETMFSAMQNVVPSHLCDTNLFDFKGITHGSEVVNGGDLAFDREEIPLQPSGWQPEEDENQLDELRLNVVEVK</sequence>
<name>TTCA_ECO45</name>
<feature type="chain" id="PRO_1000188634" description="tRNA-cytidine(32) 2-sulfurtransferase">
    <location>
        <begin position="1"/>
        <end position="311"/>
    </location>
</feature>
<feature type="short sequence motif" description="PP-loop motif" evidence="1">
    <location>
        <begin position="47"/>
        <end position="52"/>
    </location>
</feature>
<feature type="binding site" evidence="1">
    <location>
        <position position="122"/>
    </location>
    <ligand>
        <name>[4Fe-4S] cluster</name>
        <dbReference type="ChEBI" id="CHEBI:49883"/>
    </ligand>
</feature>
<feature type="binding site" evidence="1">
    <location>
        <position position="125"/>
    </location>
    <ligand>
        <name>[4Fe-4S] cluster</name>
        <dbReference type="ChEBI" id="CHEBI:49883"/>
    </ligand>
</feature>
<feature type="binding site" evidence="1">
    <location>
        <position position="213"/>
    </location>
    <ligand>
        <name>[4Fe-4S] cluster</name>
        <dbReference type="ChEBI" id="CHEBI:49883"/>
    </ligand>
</feature>
<gene>
    <name evidence="1" type="primary">ttcA</name>
    <name type="ordered locus">ECS88_1488</name>
</gene>
<dbReference type="EC" id="2.8.1.-" evidence="1"/>
<dbReference type="EMBL" id="CU928161">
    <property type="protein sequence ID" value="CAR02807.1"/>
    <property type="molecule type" value="Genomic_DNA"/>
</dbReference>
<dbReference type="RefSeq" id="WP_001157413.1">
    <property type="nucleotide sequence ID" value="NC_011742.1"/>
</dbReference>
<dbReference type="SMR" id="B7MM21"/>
<dbReference type="KEGG" id="ecz:ECS88_1488"/>
<dbReference type="HOGENOM" id="CLU_026481_0_0_6"/>
<dbReference type="Proteomes" id="UP000000747">
    <property type="component" value="Chromosome"/>
</dbReference>
<dbReference type="GO" id="GO:0005737">
    <property type="term" value="C:cytoplasm"/>
    <property type="evidence" value="ECO:0007669"/>
    <property type="project" value="UniProtKB-SubCell"/>
</dbReference>
<dbReference type="GO" id="GO:0051539">
    <property type="term" value="F:4 iron, 4 sulfur cluster binding"/>
    <property type="evidence" value="ECO:0007669"/>
    <property type="project" value="UniProtKB-UniRule"/>
</dbReference>
<dbReference type="GO" id="GO:0005524">
    <property type="term" value="F:ATP binding"/>
    <property type="evidence" value="ECO:0007669"/>
    <property type="project" value="UniProtKB-UniRule"/>
</dbReference>
<dbReference type="GO" id="GO:0000287">
    <property type="term" value="F:magnesium ion binding"/>
    <property type="evidence" value="ECO:0007669"/>
    <property type="project" value="UniProtKB-UniRule"/>
</dbReference>
<dbReference type="GO" id="GO:0016783">
    <property type="term" value="F:sulfurtransferase activity"/>
    <property type="evidence" value="ECO:0007669"/>
    <property type="project" value="UniProtKB-UniRule"/>
</dbReference>
<dbReference type="GO" id="GO:0000049">
    <property type="term" value="F:tRNA binding"/>
    <property type="evidence" value="ECO:0007669"/>
    <property type="project" value="UniProtKB-KW"/>
</dbReference>
<dbReference type="GO" id="GO:0034227">
    <property type="term" value="P:tRNA thio-modification"/>
    <property type="evidence" value="ECO:0007669"/>
    <property type="project" value="UniProtKB-UniRule"/>
</dbReference>
<dbReference type="CDD" id="cd24138">
    <property type="entry name" value="TtcA-like"/>
    <property type="match status" value="1"/>
</dbReference>
<dbReference type="FunFam" id="3.40.50.620:FF:000046">
    <property type="entry name" value="tRNA-cytidine(32) 2-sulfurtransferase"/>
    <property type="match status" value="1"/>
</dbReference>
<dbReference type="Gene3D" id="3.40.50.620">
    <property type="entry name" value="HUPs"/>
    <property type="match status" value="1"/>
</dbReference>
<dbReference type="HAMAP" id="MF_01850">
    <property type="entry name" value="TtcA"/>
    <property type="match status" value="1"/>
</dbReference>
<dbReference type="InterPro" id="IPR014729">
    <property type="entry name" value="Rossmann-like_a/b/a_fold"/>
</dbReference>
<dbReference type="InterPro" id="IPR011063">
    <property type="entry name" value="TilS/TtcA_N"/>
</dbReference>
<dbReference type="InterPro" id="IPR012089">
    <property type="entry name" value="tRNA_Cyd_32_2_STrfase"/>
</dbReference>
<dbReference type="InterPro" id="IPR035107">
    <property type="entry name" value="tRNA_thiolation_TtcA_Ctu1"/>
</dbReference>
<dbReference type="NCBIfam" id="NF007972">
    <property type="entry name" value="PRK10696.1"/>
    <property type="match status" value="1"/>
</dbReference>
<dbReference type="PANTHER" id="PTHR43686:SF1">
    <property type="entry name" value="AMINOTRAN_5 DOMAIN-CONTAINING PROTEIN"/>
    <property type="match status" value="1"/>
</dbReference>
<dbReference type="PANTHER" id="PTHR43686">
    <property type="entry name" value="SULFURTRANSFERASE-RELATED"/>
    <property type="match status" value="1"/>
</dbReference>
<dbReference type="Pfam" id="PF01171">
    <property type="entry name" value="ATP_bind_3"/>
    <property type="match status" value="1"/>
</dbReference>
<dbReference type="PIRSF" id="PIRSF004976">
    <property type="entry name" value="ATPase_YdaO"/>
    <property type="match status" value="1"/>
</dbReference>
<dbReference type="SUPFAM" id="SSF52402">
    <property type="entry name" value="Adenine nucleotide alpha hydrolases-like"/>
    <property type="match status" value="1"/>
</dbReference>
<evidence type="ECO:0000255" key="1">
    <source>
        <dbReference type="HAMAP-Rule" id="MF_01850"/>
    </source>
</evidence>
<accession>B7MM21</accession>
<proteinExistence type="inferred from homology"/>
<organism>
    <name type="scientific">Escherichia coli O45:K1 (strain S88 / ExPEC)</name>
    <dbReference type="NCBI Taxonomy" id="585035"/>
    <lineage>
        <taxon>Bacteria</taxon>
        <taxon>Pseudomonadati</taxon>
        <taxon>Pseudomonadota</taxon>
        <taxon>Gammaproteobacteria</taxon>
        <taxon>Enterobacterales</taxon>
        <taxon>Enterobacteriaceae</taxon>
        <taxon>Escherichia</taxon>
    </lineage>
</organism>